<accession>Q8FFF4</accession>
<reference key="1">
    <citation type="journal article" date="2002" name="Proc. Natl. Acad. Sci. U.S.A.">
        <title>Extensive mosaic structure revealed by the complete genome sequence of uropathogenic Escherichia coli.</title>
        <authorList>
            <person name="Welch R.A."/>
            <person name="Burland V."/>
            <person name="Plunkett G. III"/>
            <person name="Redford P."/>
            <person name="Roesch P."/>
            <person name="Rasko D."/>
            <person name="Buckles E.L."/>
            <person name="Liou S.-R."/>
            <person name="Boutin A."/>
            <person name="Hackett J."/>
            <person name="Stroud D."/>
            <person name="Mayhew G.F."/>
            <person name="Rose D.J."/>
            <person name="Zhou S."/>
            <person name="Schwartz D.C."/>
            <person name="Perna N.T."/>
            <person name="Mobley H.L.T."/>
            <person name="Donnenberg M.S."/>
            <person name="Blattner F.R."/>
        </authorList>
    </citation>
    <scope>NUCLEOTIDE SEQUENCE [LARGE SCALE GENOMIC DNA]</scope>
    <source>
        <strain>CFT073 / ATCC 700928 / UPEC</strain>
    </source>
</reference>
<reference key="2">
    <citation type="journal article" date="2003" name="Mol. Microbiol.">
        <title>Uropathogenic Escherichia coli use D-serine deaminase to modulate infection of the murine urinary tract.</title>
        <authorList>
            <person name="Roesch P.L."/>
            <person name="Redford P."/>
            <person name="Batchelet S."/>
            <person name="Moritz R.L."/>
            <person name="Pellett S."/>
            <person name="Haugen B.J."/>
            <person name="Blattner F.R."/>
            <person name="Welch R.A."/>
        </authorList>
    </citation>
    <scope>DISRUPTION PHENOTYPE</scope>
    <source>
        <strain>CFT073 / ATCC 700928 / UPEC</strain>
    </source>
</reference>
<reference key="3">
    <citation type="journal article" date="2006" name="J. Bacteriol.">
        <title>DsdX is the second D-serine transporter in uropathogenic Escherichia coli clinical isolate CFT073.</title>
        <authorList>
            <person name="Anfora A.T."/>
            <person name="Welch R.A."/>
        </authorList>
    </citation>
    <scope>DISRUPTION PHENOTYPE</scope>
    <source>
        <strain>CFT073 / ATCC 700928 / UPEC</strain>
    </source>
</reference>
<reference key="4">
    <citation type="journal article" date="2015" name="PLoS ONE">
        <title>dsdA does not affect colonization of the murine urinary tract by Escherichia coli CFT073.</title>
        <authorList>
            <person name="Hryckowian A.J."/>
            <person name="Baisa G.A."/>
            <person name="Schwartz K.J."/>
            <person name="Welch R.A."/>
        </authorList>
    </citation>
    <scope>CORRECTION OF DISRUPTION PHENOTYPE</scope>
</reference>
<gene>
    <name evidence="1" type="primary">dsdA</name>
    <name type="ordered locus">c2901</name>
</gene>
<evidence type="ECO:0000255" key="1">
    <source>
        <dbReference type="HAMAP-Rule" id="MF_01030"/>
    </source>
</evidence>
<evidence type="ECO:0000269" key="2">
    <source>
    </source>
</evidence>
<evidence type="ECO:0000269" key="3">
    <source>
    </source>
</evidence>
<evidence type="ECO:0000269" key="4">
    <source>
    </source>
</evidence>
<evidence type="ECO:0000305" key="5">
    <source>
    </source>
</evidence>
<evidence type="ECO:0000305" key="6">
    <source>
    </source>
</evidence>
<comment type="catalytic activity">
    <reaction evidence="1">
        <text>D-serine = pyruvate + NH4(+)</text>
        <dbReference type="Rhea" id="RHEA:13977"/>
        <dbReference type="ChEBI" id="CHEBI:15361"/>
        <dbReference type="ChEBI" id="CHEBI:28938"/>
        <dbReference type="ChEBI" id="CHEBI:35247"/>
        <dbReference type="EC" id="4.3.1.18"/>
    </reaction>
</comment>
<comment type="cofactor">
    <cofactor evidence="1">
        <name>pyridoxal 5'-phosphate</name>
        <dbReference type="ChEBI" id="CHEBI:597326"/>
    </cofactor>
</comment>
<comment type="subunit">
    <text evidence="1">Monomer.</text>
</comment>
<comment type="disruption phenotype">
    <text evidence="2 3 4">Initially shown to have a 5-6 hour lag phase when grown in human urine, bacteria are initially rounded and swollen but are close to wild-type in morphology by 24 hours and to be more competitive than wild-type in mouse infection (PubMed:12823810). The wild-type (wt) control was later shown to have an amber mutation in rpoS; when the dsdA gene is disrupted in a strain wt for rpoS a growth defect in human urine, lack of growth on minimal medium with D-serine and no difference in growth in a mouse infection model was seen (PubMed:26366567). Single deletion, grows on D-alanine but not D-serine or D-serine plus glycerol (PubMed:16952954).</text>
</comment>
<comment type="miscellaneous">
    <text evidence="5 6">E.coli CFT073, a uropathogenic strain (UPEC), was originally isolated from urine, which has a high concentration of D-serine. D-serine is toxic to bacteria. The ability to take up D-serine coupled with the activity of this enzyme may allow use of this amino acid as a carbon source in a sugar-poor environment.</text>
</comment>
<comment type="similarity">
    <text evidence="1">Belongs to the serine/threonine dehydratase family. DsdA subfamily.</text>
</comment>
<proteinExistence type="inferred from homology"/>
<name>SDHD_ECOL6</name>
<organism>
    <name type="scientific">Escherichia coli O6:H1 (strain CFT073 / ATCC 700928 / UPEC)</name>
    <dbReference type="NCBI Taxonomy" id="199310"/>
    <lineage>
        <taxon>Bacteria</taxon>
        <taxon>Pseudomonadati</taxon>
        <taxon>Pseudomonadota</taxon>
        <taxon>Gammaproteobacteria</taxon>
        <taxon>Enterobacterales</taxon>
        <taxon>Enterobacteriaceae</taxon>
        <taxon>Escherichia</taxon>
    </lineage>
</organism>
<sequence length="442" mass="47829">MENAKMNSLIAQYPLVEDLVALKETTWFNPGTTSLAEGLPYVGLTEQDVQDAHARLSRFAPYLAKAFPETAAAGGIIESELVAIPAMQKRLEKEYQQPIAGQLLLKKDSHLPISGSIKARGGIYEVLAHAEKLALEAGLLTLEDDYSKLLSPEFKQFFSQYSIAVGSTGNLGLSIGIMSARIGFKVTVHMSADARAWKKAKLRSHGVTVVEYEQDYGVAVEEGRKAAQSDPNCFFIDDENSRTLFLGYSVAGQRLKAQFAQQGRIVDADNPLFVYLPCGVGGGPGGVAFGLKLAFGDHVHCFFAEPTHSPCMLLGVHTGLHDQISVQDIGIDNLTAADGLAVGRASGFVGRAMERLLDGFYTLSDQTMYDMLGWLAQEEGIRLEPSALAGMAGSQRVCASVSYQQMHGFSAEQLRNATHLVWATGGGMVPEEEMNQYLAKGR</sequence>
<dbReference type="EC" id="4.3.1.18" evidence="1"/>
<dbReference type="EMBL" id="AE014075">
    <property type="protein sequence ID" value="AAN81351.1"/>
    <property type="molecule type" value="Genomic_DNA"/>
</dbReference>
<dbReference type="RefSeq" id="WP_000426391.1">
    <property type="nucleotide sequence ID" value="NZ_CP051263.1"/>
</dbReference>
<dbReference type="SMR" id="Q8FFF4"/>
<dbReference type="STRING" id="199310.c2901"/>
<dbReference type="KEGG" id="ecc:c2901"/>
<dbReference type="eggNOG" id="COG3048">
    <property type="taxonomic scope" value="Bacteria"/>
</dbReference>
<dbReference type="HOGENOM" id="CLU_035707_0_0_6"/>
<dbReference type="BioCyc" id="ECOL199310:C2901-MONOMER"/>
<dbReference type="Proteomes" id="UP000001410">
    <property type="component" value="Chromosome"/>
</dbReference>
<dbReference type="GO" id="GO:0008721">
    <property type="term" value="F:D-serine ammonia-lyase activity"/>
    <property type="evidence" value="ECO:0007669"/>
    <property type="project" value="UniProtKB-EC"/>
</dbReference>
<dbReference type="GO" id="GO:0016836">
    <property type="term" value="F:hydro-lyase activity"/>
    <property type="evidence" value="ECO:0007669"/>
    <property type="project" value="UniProtKB-UniRule"/>
</dbReference>
<dbReference type="GO" id="GO:0030170">
    <property type="term" value="F:pyridoxal phosphate binding"/>
    <property type="evidence" value="ECO:0007669"/>
    <property type="project" value="InterPro"/>
</dbReference>
<dbReference type="GO" id="GO:0036088">
    <property type="term" value="P:D-serine catabolic process"/>
    <property type="evidence" value="ECO:0007669"/>
    <property type="project" value="TreeGrafter"/>
</dbReference>
<dbReference type="GO" id="GO:0009097">
    <property type="term" value="P:isoleucine biosynthetic process"/>
    <property type="evidence" value="ECO:0007669"/>
    <property type="project" value="TreeGrafter"/>
</dbReference>
<dbReference type="CDD" id="cd06447">
    <property type="entry name" value="D-Ser-dehyd"/>
    <property type="match status" value="1"/>
</dbReference>
<dbReference type="FunFam" id="3.40.50.1100:FF:000018">
    <property type="entry name" value="D-serine dehydratase"/>
    <property type="match status" value="1"/>
</dbReference>
<dbReference type="Gene3D" id="3.40.50.1100">
    <property type="match status" value="2"/>
</dbReference>
<dbReference type="HAMAP" id="MF_01030">
    <property type="entry name" value="D_Ser_dehydrat"/>
    <property type="match status" value="1"/>
</dbReference>
<dbReference type="InterPro" id="IPR011780">
    <property type="entry name" value="D_Ser_am_lyase"/>
</dbReference>
<dbReference type="InterPro" id="IPR050147">
    <property type="entry name" value="Ser/Thr_Dehydratase"/>
</dbReference>
<dbReference type="InterPro" id="IPR000634">
    <property type="entry name" value="Ser/Thr_deHydtase_PyrdxlP-BS"/>
</dbReference>
<dbReference type="InterPro" id="IPR001926">
    <property type="entry name" value="TrpB-like_PALP"/>
</dbReference>
<dbReference type="InterPro" id="IPR036052">
    <property type="entry name" value="TrpB-like_PALP_sf"/>
</dbReference>
<dbReference type="NCBIfam" id="TIGR02035">
    <property type="entry name" value="D_Ser_am_lyase"/>
    <property type="match status" value="1"/>
</dbReference>
<dbReference type="NCBIfam" id="NF002823">
    <property type="entry name" value="PRK02991.1"/>
    <property type="match status" value="1"/>
</dbReference>
<dbReference type="PANTHER" id="PTHR48078:SF9">
    <property type="entry name" value="D-SERINE DEHYDRATASE"/>
    <property type="match status" value="1"/>
</dbReference>
<dbReference type="PANTHER" id="PTHR48078">
    <property type="entry name" value="THREONINE DEHYDRATASE, MITOCHONDRIAL-RELATED"/>
    <property type="match status" value="1"/>
</dbReference>
<dbReference type="Pfam" id="PF00291">
    <property type="entry name" value="PALP"/>
    <property type="match status" value="1"/>
</dbReference>
<dbReference type="SUPFAM" id="SSF53686">
    <property type="entry name" value="Tryptophan synthase beta subunit-like PLP-dependent enzymes"/>
    <property type="match status" value="1"/>
</dbReference>
<dbReference type="PROSITE" id="PS00165">
    <property type="entry name" value="DEHYDRATASE_SER_THR"/>
    <property type="match status" value="1"/>
</dbReference>
<protein>
    <recommendedName>
        <fullName evidence="1">D-serine dehydratase</fullName>
        <ecNumber evidence="1">4.3.1.18</ecNumber>
    </recommendedName>
    <alternativeName>
        <fullName evidence="1">D-serine deaminase</fullName>
        <shortName evidence="1">DSD</shortName>
    </alternativeName>
</protein>
<feature type="chain" id="PRO_0000185612" description="D-serine dehydratase">
    <location>
        <begin position="1"/>
        <end position="442"/>
    </location>
</feature>
<feature type="modified residue" description="N6-(pyridoxal phosphate)lysine" evidence="1">
    <location>
        <position position="118"/>
    </location>
</feature>
<keyword id="KW-0456">Lyase</keyword>
<keyword id="KW-0663">Pyridoxal phosphate</keyword>
<keyword id="KW-1185">Reference proteome</keyword>